<reference key="1">
    <citation type="journal article" date="2008" name="Proc. Natl. Acad. Sci. U.S.A.">
        <title>The genome of Clostridium kluyveri, a strict anaerobe with unique metabolic features.</title>
        <authorList>
            <person name="Seedorf H."/>
            <person name="Fricke W.F."/>
            <person name="Veith B."/>
            <person name="Brueggemann H."/>
            <person name="Liesegang H."/>
            <person name="Strittmatter A."/>
            <person name="Miethke M."/>
            <person name="Buckel W."/>
            <person name="Hinderberger J."/>
            <person name="Li F."/>
            <person name="Hagemeier C."/>
            <person name="Thauer R.K."/>
            <person name="Gottschalk G."/>
        </authorList>
    </citation>
    <scope>NUCLEOTIDE SEQUENCE [LARGE SCALE GENOMIC DNA]</scope>
    <source>
        <strain>ATCC 8527 / DSM 555 / NBRC 12016 / NCIMB 10680 / K1</strain>
    </source>
</reference>
<organism>
    <name type="scientific">Clostridium kluyveri (strain ATCC 8527 / DSM 555 / NBRC 12016 / NCIMB 10680 / K1)</name>
    <dbReference type="NCBI Taxonomy" id="431943"/>
    <lineage>
        <taxon>Bacteria</taxon>
        <taxon>Bacillati</taxon>
        <taxon>Bacillota</taxon>
        <taxon>Clostridia</taxon>
        <taxon>Eubacteriales</taxon>
        <taxon>Clostridiaceae</taxon>
        <taxon>Clostridium</taxon>
    </lineage>
</organism>
<sequence>MRKKLEQIKENAFKELQDKRKDLDIESIRIKYLGKKGELTHILRGMKELSKEERPIIGKLANDIRTALENAIEEASQRIKSSERESRVKGETIDITMPGIKQNIGRRHPLEQVLEDMKEIFVSMGFTIEEGPEVELDYYNFEALNIPKNHPARGEQDTFYINDNLVLRTQTSPTQIRTMEKQKPPIKMISPGKVYRSDSVDATHSPIFYQMEGLVVDKGITFADLKGTLELFARKMFGDEMKTKFRPHHFPFTEPSAEMDATCFVCNGEGCRVCKGEGWIELLGCGMVHPQVLRNCNIDPEVYSGFAFGMGVDRMVMLKYGIDDIRNMYESDMRFLNQF</sequence>
<dbReference type="EC" id="6.1.1.20" evidence="1"/>
<dbReference type="EMBL" id="CP000673">
    <property type="protein sequence ID" value="EDK35200.1"/>
    <property type="molecule type" value="Genomic_DNA"/>
</dbReference>
<dbReference type="RefSeq" id="WP_012103537.1">
    <property type="nucleotide sequence ID" value="NC_009706.1"/>
</dbReference>
<dbReference type="SMR" id="A5N254"/>
<dbReference type="STRING" id="431943.CKL_3192"/>
<dbReference type="KEGG" id="ckl:CKL_3192"/>
<dbReference type="eggNOG" id="COG0016">
    <property type="taxonomic scope" value="Bacteria"/>
</dbReference>
<dbReference type="HOGENOM" id="CLU_025086_0_1_9"/>
<dbReference type="Proteomes" id="UP000002411">
    <property type="component" value="Chromosome"/>
</dbReference>
<dbReference type="GO" id="GO:0005737">
    <property type="term" value="C:cytoplasm"/>
    <property type="evidence" value="ECO:0007669"/>
    <property type="project" value="UniProtKB-SubCell"/>
</dbReference>
<dbReference type="GO" id="GO:0005524">
    <property type="term" value="F:ATP binding"/>
    <property type="evidence" value="ECO:0007669"/>
    <property type="project" value="UniProtKB-UniRule"/>
</dbReference>
<dbReference type="GO" id="GO:0140096">
    <property type="term" value="F:catalytic activity, acting on a protein"/>
    <property type="evidence" value="ECO:0007669"/>
    <property type="project" value="UniProtKB-ARBA"/>
</dbReference>
<dbReference type="GO" id="GO:0000287">
    <property type="term" value="F:magnesium ion binding"/>
    <property type="evidence" value="ECO:0007669"/>
    <property type="project" value="UniProtKB-UniRule"/>
</dbReference>
<dbReference type="GO" id="GO:0004826">
    <property type="term" value="F:phenylalanine-tRNA ligase activity"/>
    <property type="evidence" value="ECO:0007669"/>
    <property type="project" value="UniProtKB-UniRule"/>
</dbReference>
<dbReference type="GO" id="GO:0016740">
    <property type="term" value="F:transferase activity"/>
    <property type="evidence" value="ECO:0007669"/>
    <property type="project" value="UniProtKB-ARBA"/>
</dbReference>
<dbReference type="GO" id="GO:0000049">
    <property type="term" value="F:tRNA binding"/>
    <property type="evidence" value="ECO:0007669"/>
    <property type="project" value="InterPro"/>
</dbReference>
<dbReference type="GO" id="GO:0006432">
    <property type="term" value="P:phenylalanyl-tRNA aminoacylation"/>
    <property type="evidence" value="ECO:0007669"/>
    <property type="project" value="UniProtKB-UniRule"/>
</dbReference>
<dbReference type="CDD" id="cd00496">
    <property type="entry name" value="PheRS_alpha_core"/>
    <property type="match status" value="1"/>
</dbReference>
<dbReference type="FunFam" id="3.30.930.10:FF:000003">
    <property type="entry name" value="Phenylalanine--tRNA ligase alpha subunit"/>
    <property type="match status" value="1"/>
</dbReference>
<dbReference type="Gene3D" id="3.30.930.10">
    <property type="entry name" value="Bira Bifunctional Protein, Domain 2"/>
    <property type="match status" value="1"/>
</dbReference>
<dbReference type="HAMAP" id="MF_00281">
    <property type="entry name" value="Phe_tRNA_synth_alpha1"/>
    <property type="match status" value="1"/>
</dbReference>
<dbReference type="InterPro" id="IPR006195">
    <property type="entry name" value="aa-tRNA-synth_II"/>
</dbReference>
<dbReference type="InterPro" id="IPR045864">
    <property type="entry name" value="aa-tRNA-synth_II/BPL/LPL"/>
</dbReference>
<dbReference type="InterPro" id="IPR004529">
    <property type="entry name" value="Phe-tRNA-synth_IIc_asu"/>
</dbReference>
<dbReference type="InterPro" id="IPR004188">
    <property type="entry name" value="Phe-tRNA_ligase_II_N"/>
</dbReference>
<dbReference type="InterPro" id="IPR022911">
    <property type="entry name" value="Phe_tRNA_ligase_alpha1_bac"/>
</dbReference>
<dbReference type="InterPro" id="IPR002319">
    <property type="entry name" value="Phenylalanyl-tRNA_Synthase"/>
</dbReference>
<dbReference type="InterPro" id="IPR010978">
    <property type="entry name" value="tRNA-bd_arm"/>
</dbReference>
<dbReference type="NCBIfam" id="TIGR00468">
    <property type="entry name" value="pheS"/>
    <property type="match status" value="1"/>
</dbReference>
<dbReference type="PANTHER" id="PTHR11538:SF41">
    <property type="entry name" value="PHENYLALANINE--TRNA LIGASE, MITOCHONDRIAL"/>
    <property type="match status" value="1"/>
</dbReference>
<dbReference type="PANTHER" id="PTHR11538">
    <property type="entry name" value="PHENYLALANYL-TRNA SYNTHETASE"/>
    <property type="match status" value="1"/>
</dbReference>
<dbReference type="Pfam" id="PF02912">
    <property type="entry name" value="Phe_tRNA-synt_N"/>
    <property type="match status" value="1"/>
</dbReference>
<dbReference type="Pfam" id="PF01409">
    <property type="entry name" value="tRNA-synt_2d"/>
    <property type="match status" value="1"/>
</dbReference>
<dbReference type="SUPFAM" id="SSF55681">
    <property type="entry name" value="Class II aaRS and biotin synthetases"/>
    <property type="match status" value="1"/>
</dbReference>
<dbReference type="SUPFAM" id="SSF46589">
    <property type="entry name" value="tRNA-binding arm"/>
    <property type="match status" value="1"/>
</dbReference>
<dbReference type="PROSITE" id="PS50862">
    <property type="entry name" value="AA_TRNA_LIGASE_II"/>
    <property type="match status" value="1"/>
</dbReference>
<name>SYFA_CLOK5</name>
<accession>A5N254</accession>
<keyword id="KW-0030">Aminoacyl-tRNA synthetase</keyword>
<keyword id="KW-0067">ATP-binding</keyword>
<keyword id="KW-0963">Cytoplasm</keyword>
<keyword id="KW-0436">Ligase</keyword>
<keyword id="KW-0460">Magnesium</keyword>
<keyword id="KW-0479">Metal-binding</keyword>
<keyword id="KW-0547">Nucleotide-binding</keyword>
<keyword id="KW-0648">Protein biosynthesis</keyword>
<keyword id="KW-1185">Reference proteome</keyword>
<gene>
    <name evidence="1" type="primary">pheS</name>
    <name type="ordered locus">CKL_3192</name>
</gene>
<comment type="catalytic activity">
    <reaction evidence="1">
        <text>tRNA(Phe) + L-phenylalanine + ATP = L-phenylalanyl-tRNA(Phe) + AMP + diphosphate + H(+)</text>
        <dbReference type="Rhea" id="RHEA:19413"/>
        <dbReference type="Rhea" id="RHEA-COMP:9668"/>
        <dbReference type="Rhea" id="RHEA-COMP:9699"/>
        <dbReference type="ChEBI" id="CHEBI:15378"/>
        <dbReference type="ChEBI" id="CHEBI:30616"/>
        <dbReference type="ChEBI" id="CHEBI:33019"/>
        <dbReference type="ChEBI" id="CHEBI:58095"/>
        <dbReference type="ChEBI" id="CHEBI:78442"/>
        <dbReference type="ChEBI" id="CHEBI:78531"/>
        <dbReference type="ChEBI" id="CHEBI:456215"/>
        <dbReference type="EC" id="6.1.1.20"/>
    </reaction>
</comment>
<comment type="cofactor">
    <cofactor evidence="1">
        <name>Mg(2+)</name>
        <dbReference type="ChEBI" id="CHEBI:18420"/>
    </cofactor>
    <text evidence="1">Binds 2 magnesium ions per tetramer.</text>
</comment>
<comment type="subunit">
    <text evidence="1">Tetramer of two alpha and two beta subunits.</text>
</comment>
<comment type="subcellular location">
    <subcellularLocation>
        <location evidence="1">Cytoplasm</location>
    </subcellularLocation>
</comment>
<comment type="similarity">
    <text evidence="1">Belongs to the class-II aminoacyl-tRNA synthetase family. Phe-tRNA synthetase alpha subunit type 1 subfamily.</text>
</comment>
<protein>
    <recommendedName>
        <fullName evidence="1">Phenylalanine--tRNA ligase alpha subunit</fullName>
        <ecNumber evidence="1">6.1.1.20</ecNumber>
    </recommendedName>
    <alternativeName>
        <fullName evidence="1">Phenylalanyl-tRNA synthetase alpha subunit</fullName>
        <shortName evidence="1">PheRS</shortName>
    </alternativeName>
</protein>
<proteinExistence type="inferred from homology"/>
<evidence type="ECO:0000255" key="1">
    <source>
        <dbReference type="HAMAP-Rule" id="MF_00281"/>
    </source>
</evidence>
<feature type="chain" id="PRO_1000078831" description="Phenylalanine--tRNA ligase alpha subunit">
    <location>
        <begin position="1"/>
        <end position="339"/>
    </location>
</feature>
<feature type="binding site" evidence="1">
    <location>
        <position position="254"/>
    </location>
    <ligand>
        <name>Mg(2+)</name>
        <dbReference type="ChEBI" id="CHEBI:18420"/>
        <note>shared with beta subunit</note>
    </ligand>
</feature>